<dbReference type="EC" id="3.4.24.-"/>
<dbReference type="EMBL" id="AL133292">
    <property type="protein sequence ID" value="CAB61952.1"/>
    <property type="molecule type" value="Genomic_DNA"/>
</dbReference>
<dbReference type="EMBL" id="CP002686">
    <property type="protein sequence ID" value="AEE78239.1"/>
    <property type="molecule type" value="Genomic_DNA"/>
</dbReference>
<dbReference type="EMBL" id="AY099737">
    <property type="protein sequence ID" value="AAM20588.1"/>
    <property type="molecule type" value="mRNA"/>
</dbReference>
<dbReference type="EMBL" id="BT000368">
    <property type="protein sequence ID" value="AAN15687.1"/>
    <property type="molecule type" value="mRNA"/>
</dbReference>
<dbReference type="PIR" id="T45642">
    <property type="entry name" value="T45642"/>
</dbReference>
<dbReference type="RefSeq" id="NP_566889.1">
    <property type="nucleotide sequence ID" value="NM_114573.3"/>
</dbReference>
<dbReference type="SMR" id="Q9SD67"/>
<dbReference type="FunCoup" id="Q9SD67">
    <property type="interactions" value="1002"/>
</dbReference>
<dbReference type="STRING" id="3702.Q9SD67"/>
<dbReference type="MEROPS" id="M41.A04"/>
<dbReference type="GlyGen" id="Q9SD67">
    <property type="glycosylation" value="1 site"/>
</dbReference>
<dbReference type="PaxDb" id="3702-AT3G47060.1"/>
<dbReference type="ProteomicsDB" id="228886"/>
<dbReference type="EnsemblPlants" id="AT3G47060.1">
    <property type="protein sequence ID" value="AT3G47060.1"/>
    <property type="gene ID" value="AT3G47060"/>
</dbReference>
<dbReference type="GeneID" id="823859"/>
<dbReference type="Gramene" id="AT3G47060.1">
    <property type="protein sequence ID" value="AT3G47060.1"/>
    <property type="gene ID" value="AT3G47060"/>
</dbReference>
<dbReference type="KEGG" id="ath:AT3G47060"/>
<dbReference type="Araport" id="AT3G47060"/>
<dbReference type="TAIR" id="AT3G47060">
    <property type="gene designation" value="FTSH7"/>
</dbReference>
<dbReference type="eggNOG" id="KOG0731">
    <property type="taxonomic scope" value="Eukaryota"/>
</dbReference>
<dbReference type="HOGENOM" id="CLU_000688_23_3_1"/>
<dbReference type="InParanoid" id="Q9SD67"/>
<dbReference type="OMA" id="QPRIHGF"/>
<dbReference type="PhylomeDB" id="Q9SD67"/>
<dbReference type="BRENDA" id="3.4.24.B20">
    <property type="organism ID" value="399"/>
</dbReference>
<dbReference type="PRO" id="PR:Q9SD67"/>
<dbReference type="Proteomes" id="UP000006548">
    <property type="component" value="Chromosome 3"/>
</dbReference>
<dbReference type="ExpressionAtlas" id="Q9SD67">
    <property type="expression patterns" value="baseline and differential"/>
</dbReference>
<dbReference type="GO" id="GO:0009507">
    <property type="term" value="C:chloroplast"/>
    <property type="evidence" value="ECO:0000314"/>
    <property type="project" value="TAIR"/>
</dbReference>
<dbReference type="GO" id="GO:0009941">
    <property type="term" value="C:chloroplast envelope"/>
    <property type="evidence" value="ECO:0007005"/>
    <property type="project" value="TAIR"/>
</dbReference>
<dbReference type="GO" id="GO:0009535">
    <property type="term" value="C:chloroplast thylakoid membrane"/>
    <property type="evidence" value="ECO:0007669"/>
    <property type="project" value="UniProtKB-SubCell"/>
</dbReference>
<dbReference type="GO" id="GO:0005524">
    <property type="term" value="F:ATP binding"/>
    <property type="evidence" value="ECO:0007669"/>
    <property type="project" value="UniProtKB-KW"/>
</dbReference>
<dbReference type="GO" id="GO:0016887">
    <property type="term" value="F:ATP hydrolysis activity"/>
    <property type="evidence" value="ECO:0007669"/>
    <property type="project" value="InterPro"/>
</dbReference>
<dbReference type="GO" id="GO:0004176">
    <property type="term" value="F:ATP-dependent peptidase activity"/>
    <property type="evidence" value="ECO:0000250"/>
    <property type="project" value="TAIR"/>
</dbReference>
<dbReference type="GO" id="GO:0004222">
    <property type="term" value="F:metalloendopeptidase activity"/>
    <property type="evidence" value="ECO:0007669"/>
    <property type="project" value="InterPro"/>
</dbReference>
<dbReference type="GO" id="GO:0008270">
    <property type="term" value="F:zinc ion binding"/>
    <property type="evidence" value="ECO:0007669"/>
    <property type="project" value="InterPro"/>
</dbReference>
<dbReference type="GO" id="GO:0006508">
    <property type="term" value="P:proteolysis"/>
    <property type="evidence" value="ECO:0007669"/>
    <property type="project" value="UniProtKB-KW"/>
</dbReference>
<dbReference type="CDD" id="cd19501">
    <property type="entry name" value="RecA-like_FtsH"/>
    <property type="match status" value="1"/>
</dbReference>
<dbReference type="FunFam" id="1.10.8.60:FF:000001">
    <property type="entry name" value="ATP-dependent zinc metalloprotease FtsH"/>
    <property type="match status" value="1"/>
</dbReference>
<dbReference type="FunFam" id="1.20.58.760:FF:000006">
    <property type="entry name" value="ATP-dependent zinc metalloprotease FTSH 7, chloroplastic"/>
    <property type="match status" value="1"/>
</dbReference>
<dbReference type="FunFam" id="3.40.50.300:FF:000352">
    <property type="entry name" value="ATP-dependent zinc metalloprotease FTSH 7, chloroplastic"/>
    <property type="match status" value="1"/>
</dbReference>
<dbReference type="Gene3D" id="1.10.8.60">
    <property type="match status" value="1"/>
</dbReference>
<dbReference type="Gene3D" id="3.30.720.210">
    <property type="match status" value="1"/>
</dbReference>
<dbReference type="Gene3D" id="3.40.50.300">
    <property type="entry name" value="P-loop containing nucleotide triphosphate hydrolases"/>
    <property type="match status" value="1"/>
</dbReference>
<dbReference type="Gene3D" id="1.20.58.760">
    <property type="entry name" value="Peptidase M41"/>
    <property type="match status" value="1"/>
</dbReference>
<dbReference type="HAMAP" id="MF_01458">
    <property type="entry name" value="FtsH"/>
    <property type="match status" value="1"/>
</dbReference>
<dbReference type="InterPro" id="IPR003593">
    <property type="entry name" value="AAA+_ATPase"/>
</dbReference>
<dbReference type="InterPro" id="IPR041569">
    <property type="entry name" value="AAA_lid_3"/>
</dbReference>
<dbReference type="InterPro" id="IPR003959">
    <property type="entry name" value="ATPase_AAA_core"/>
</dbReference>
<dbReference type="InterPro" id="IPR003960">
    <property type="entry name" value="ATPase_AAA_CS"/>
</dbReference>
<dbReference type="InterPro" id="IPR005936">
    <property type="entry name" value="FtsH"/>
</dbReference>
<dbReference type="InterPro" id="IPR027417">
    <property type="entry name" value="P-loop_NTPase"/>
</dbReference>
<dbReference type="InterPro" id="IPR011546">
    <property type="entry name" value="Pept_M41_FtsH_extracell"/>
</dbReference>
<dbReference type="InterPro" id="IPR000642">
    <property type="entry name" value="Peptidase_M41"/>
</dbReference>
<dbReference type="InterPro" id="IPR037219">
    <property type="entry name" value="Peptidase_M41-like"/>
</dbReference>
<dbReference type="NCBIfam" id="TIGR01241">
    <property type="entry name" value="FtsH_fam"/>
    <property type="match status" value="1"/>
</dbReference>
<dbReference type="PANTHER" id="PTHR23076:SF49">
    <property type="entry name" value="ATP-DEPENDENT ZINC METALLOPROTEASE FTSH 7, CHLOROPLASTIC"/>
    <property type="match status" value="1"/>
</dbReference>
<dbReference type="PANTHER" id="PTHR23076">
    <property type="entry name" value="METALLOPROTEASE M41 FTSH"/>
    <property type="match status" value="1"/>
</dbReference>
<dbReference type="Pfam" id="PF00004">
    <property type="entry name" value="AAA"/>
    <property type="match status" value="1"/>
</dbReference>
<dbReference type="Pfam" id="PF17862">
    <property type="entry name" value="AAA_lid_3"/>
    <property type="match status" value="1"/>
</dbReference>
<dbReference type="Pfam" id="PF06480">
    <property type="entry name" value="FtsH_ext"/>
    <property type="match status" value="1"/>
</dbReference>
<dbReference type="Pfam" id="PF01434">
    <property type="entry name" value="Peptidase_M41"/>
    <property type="match status" value="1"/>
</dbReference>
<dbReference type="SMART" id="SM00382">
    <property type="entry name" value="AAA"/>
    <property type="match status" value="1"/>
</dbReference>
<dbReference type="SUPFAM" id="SSF140990">
    <property type="entry name" value="FtsH protease domain-like"/>
    <property type="match status" value="1"/>
</dbReference>
<dbReference type="SUPFAM" id="SSF52540">
    <property type="entry name" value="P-loop containing nucleoside triphosphate hydrolases"/>
    <property type="match status" value="1"/>
</dbReference>
<dbReference type="PROSITE" id="PS00674">
    <property type="entry name" value="AAA"/>
    <property type="match status" value="1"/>
</dbReference>
<comment type="function">
    <text>Probable ATP-dependent zinc metallopeptidase.</text>
</comment>
<comment type="cofactor">
    <cofactor evidence="1">
        <name>Zn(2+)</name>
        <dbReference type="ChEBI" id="CHEBI:29105"/>
    </cofactor>
    <text evidence="1">Binds 1 zinc ion per subunit.</text>
</comment>
<comment type="subcellular location">
    <subcellularLocation>
        <location evidence="4">Plastid</location>
        <location evidence="4">Chloroplast thylakoid membrane</location>
        <topology evidence="4">Multi-pass membrane protein</topology>
        <orientation evidence="4">Stromal side</orientation>
    </subcellularLocation>
</comment>
<comment type="similarity">
    <text evidence="5">In the N-terminal section; belongs to the AAA ATPase family.</text>
</comment>
<comment type="similarity">
    <text evidence="5">In the C-terminal section; belongs to the peptidase M41 family.</text>
</comment>
<reference key="1">
    <citation type="journal article" date="2000" name="Nature">
        <title>Sequence and analysis of chromosome 3 of the plant Arabidopsis thaliana.</title>
        <authorList>
            <person name="Salanoubat M."/>
            <person name="Lemcke K."/>
            <person name="Rieger M."/>
            <person name="Ansorge W."/>
            <person name="Unseld M."/>
            <person name="Fartmann B."/>
            <person name="Valle G."/>
            <person name="Bloecker H."/>
            <person name="Perez-Alonso M."/>
            <person name="Obermaier B."/>
            <person name="Delseny M."/>
            <person name="Boutry M."/>
            <person name="Grivell L.A."/>
            <person name="Mache R."/>
            <person name="Puigdomenech P."/>
            <person name="De Simone V."/>
            <person name="Choisne N."/>
            <person name="Artiguenave F."/>
            <person name="Robert C."/>
            <person name="Brottier P."/>
            <person name="Wincker P."/>
            <person name="Cattolico L."/>
            <person name="Weissenbach J."/>
            <person name="Saurin W."/>
            <person name="Quetier F."/>
            <person name="Schaefer M."/>
            <person name="Mueller-Auer S."/>
            <person name="Gabel C."/>
            <person name="Fuchs M."/>
            <person name="Benes V."/>
            <person name="Wurmbach E."/>
            <person name="Drzonek H."/>
            <person name="Erfle H."/>
            <person name="Jordan N."/>
            <person name="Bangert S."/>
            <person name="Wiedelmann R."/>
            <person name="Kranz H."/>
            <person name="Voss H."/>
            <person name="Holland R."/>
            <person name="Brandt P."/>
            <person name="Nyakatura G."/>
            <person name="Vezzi A."/>
            <person name="D'Angelo M."/>
            <person name="Pallavicini A."/>
            <person name="Toppo S."/>
            <person name="Simionati B."/>
            <person name="Conrad A."/>
            <person name="Hornischer K."/>
            <person name="Kauer G."/>
            <person name="Loehnert T.-H."/>
            <person name="Nordsiek G."/>
            <person name="Reichelt J."/>
            <person name="Scharfe M."/>
            <person name="Schoen O."/>
            <person name="Bargues M."/>
            <person name="Terol J."/>
            <person name="Climent J."/>
            <person name="Navarro P."/>
            <person name="Collado C."/>
            <person name="Perez-Perez A."/>
            <person name="Ottenwaelder B."/>
            <person name="Duchemin D."/>
            <person name="Cooke R."/>
            <person name="Laudie M."/>
            <person name="Berger-Llauro C."/>
            <person name="Purnelle B."/>
            <person name="Masuy D."/>
            <person name="de Haan M."/>
            <person name="Maarse A.C."/>
            <person name="Alcaraz J.-P."/>
            <person name="Cottet A."/>
            <person name="Casacuberta E."/>
            <person name="Monfort A."/>
            <person name="Argiriou A."/>
            <person name="Flores M."/>
            <person name="Liguori R."/>
            <person name="Vitale D."/>
            <person name="Mannhaupt G."/>
            <person name="Haase D."/>
            <person name="Schoof H."/>
            <person name="Rudd S."/>
            <person name="Zaccaria P."/>
            <person name="Mewes H.-W."/>
            <person name="Mayer K.F.X."/>
            <person name="Kaul S."/>
            <person name="Town C.D."/>
            <person name="Koo H.L."/>
            <person name="Tallon L.J."/>
            <person name="Jenkins J."/>
            <person name="Rooney T."/>
            <person name="Rizzo M."/>
            <person name="Walts A."/>
            <person name="Utterback T."/>
            <person name="Fujii C.Y."/>
            <person name="Shea T.P."/>
            <person name="Creasy T.H."/>
            <person name="Haas B."/>
            <person name="Maiti R."/>
            <person name="Wu D."/>
            <person name="Peterson J."/>
            <person name="Van Aken S."/>
            <person name="Pai G."/>
            <person name="Militscher J."/>
            <person name="Sellers P."/>
            <person name="Gill J.E."/>
            <person name="Feldblyum T.V."/>
            <person name="Preuss D."/>
            <person name="Lin X."/>
            <person name="Nierman W.C."/>
            <person name="Salzberg S.L."/>
            <person name="White O."/>
            <person name="Venter J.C."/>
            <person name="Fraser C.M."/>
            <person name="Kaneko T."/>
            <person name="Nakamura Y."/>
            <person name="Sato S."/>
            <person name="Kato T."/>
            <person name="Asamizu E."/>
            <person name="Sasamoto S."/>
            <person name="Kimura T."/>
            <person name="Idesawa K."/>
            <person name="Kawashima K."/>
            <person name="Kishida Y."/>
            <person name="Kiyokawa C."/>
            <person name="Kohara M."/>
            <person name="Matsumoto M."/>
            <person name="Matsuno A."/>
            <person name="Muraki A."/>
            <person name="Nakayama S."/>
            <person name="Nakazaki N."/>
            <person name="Shinpo S."/>
            <person name="Takeuchi C."/>
            <person name="Wada T."/>
            <person name="Watanabe A."/>
            <person name="Yamada M."/>
            <person name="Yasuda M."/>
            <person name="Tabata S."/>
        </authorList>
    </citation>
    <scope>NUCLEOTIDE SEQUENCE [LARGE SCALE GENOMIC DNA]</scope>
    <source>
        <strain>cv. Columbia</strain>
    </source>
</reference>
<reference key="2">
    <citation type="journal article" date="2017" name="Plant J.">
        <title>Araport11: a complete reannotation of the Arabidopsis thaliana reference genome.</title>
        <authorList>
            <person name="Cheng C.Y."/>
            <person name="Krishnakumar V."/>
            <person name="Chan A.P."/>
            <person name="Thibaud-Nissen F."/>
            <person name="Schobel S."/>
            <person name="Town C.D."/>
        </authorList>
    </citation>
    <scope>GENOME REANNOTATION</scope>
    <source>
        <strain>cv. Columbia</strain>
    </source>
</reference>
<reference key="3">
    <citation type="journal article" date="2003" name="Science">
        <title>Empirical analysis of transcriptional activity in the Arabidopsis genome.</title>
        <authorList>
            <person name="Yamada K."/>
            <person name="Lim J."/>
            <person name="Dale J.M."/>
            <person name="Chen H."/>
            <person name="Shinn P."/>
            <person name="Palm C.J."/>
            <person name="Southwick A.M."/>
            <person name="Wu H.C."/>
            <person name="Kim C.J."/>
            <person name="Nguyen M."/>
            <person name="Pham P.K."/>
            <person name="Cheuk R.F."/>
            <person name="Karlin-Newmann G."/>
            <person name="Liu S.X."/>
            <person name="Lam B."/>
            <person name="Sakano H."/>
            <person name="Wu T."/>
            <person name="Yu G."/>
            <person name="Miranda M."/>
            <person name="Quach H.L."/>
            <person name="Tripp M."/>
            <person name="Chang C.H."/>
            <person name="Lee J.M."/>
            <person name="Toriumi M.J."/>
            <person name="Chan M.M."/>
            <person name="Tang C.C."/>
            <person name="Onodera C.S."/>
            <person name="Deng J.M."/>
            <person name="Akiyama K."/>
            <person name="Ansari Y."/>
            <person name="Arakawa T."/>
            <person name="Banh J."/>
            <person name="Banno F."/>
            <person name="Bowser L."/>
            <person name="Brooks S.Y."/>
            <person name="Carninci P."/>
            <person name="Chao Q."/>
            <person name="Choy N."/>
            <person name="Enju A."/>
            <person name="Goldsmith A.D."/>
            <person name="Gurjal M."/>
            <person name="Hansen N.F."/>
            <person name="Hayashizaki Y."/>
            <person name="Johnson-Hopson C."/>
            <person name="Hsuan V.W."/>
            <person name="Iida K."/>
            <person name="Karnes M."/>
            <person name="Khan S."/>
            <person name="Koesema E."/>
            <person name="Ishida J."/>
            <person name="Jiang P.X."/>
            <person name="Jones T."/>
            <person name="Kawai J."/>
            <person name="Kamiya A."/>
            <person name="Meyers C."/>
            <person name="Nakajima M."/>
            <person name="Narusaka M."/>
            <person name="Seki M."/>
            <person name="Sakurai T."/>
            <person name="Satou M."/>
            <person name="Tamse R."/>
            <person name="Vaysberg M."/>
            <person name="Wallender E.K."/>
            <person name="Wong C."/>
            <person name="Yamamura Y."/>
            <person name="Yuan S."/>
            <person name="Shinozaki K."/>
            <person name="Davis R.W."/>
            <person name="Theologis A."/>
            <person name="Ecker J.R."/>
        </authorList>
    </citation>
    <scope>NUCLEOTIDE SEQUENCE [LARGE SCALE MRNA]</scope>
    <source>
        <strain>cv. Columbia</strain>
    </source>
</reference>
<reference key="4">
    <citation type="journal article" date="2001" name="Plant Physiol.">
        <title>Chloroplast and mitochondrial proteases in Arabidopsis. A proposed nomenclature.</title>
        <authorList>
            <person name="Adam Z."/>
            <person name="Adamska I."/>
            <person name="Nakabayashi K."/>
            <person name="Ostersetzer O."/>
            <person name="Haussuhl K."/>
            <person name="Manuell A."/>
            <person name="Zheng B."/>
            <person name="Vallon O."/>
            <person name="Rodermel S.R."/>
            <person name="Shinozaki K."/>
            <person name="Clarke A.K."/>
        </authorList>
    </citation>
    <scope>GENE FAMILY</scope>
    <scope>NOMENCLATURE</scope>
</reference>
<reference key="5">
    <citation type="journal article" date="2003" name="Plant Cell">
        <title>Coordinated regulation and complex formation of yellow variegated1 and yellow variegated2, chloroplastic FtsH metalloproteases involved in the repair cycle of photosystem II in Arabidopsis thylakoid membranes.</title>
        <authorList>
            <person name="Sakamoto W."/>
            <person name="Zaltsman A."/>
            <person name="Adam Z."/>
            <person name="Takahashi Y."/>
        </authorList>
    </citation>
    <scope>SUBCELLULAR LOCATION</scope>
</reference>
<reference key="6">
    <citation type="journal article" date="2004" name="Plant J.">
        <title>The Arabidopsis FtsH metalloprotease gene family: interchangeability of subunits in chloroplast oligomeric complexes.</title>
        <authorList>
            <person name="Yu F."/>
            <person name="Park S."/>
            <person name="Rodermel S.R."/>
        </authorList>
    </citation>
    <scope>GENE FAMILY</scope>
    <scope>NOMENCLATURE</scope>
</reference>
<feature type="transit peptide" description="Chloroplast" evidence="2">
    <location>
        <begin position="1"/>
        <end position="55"/>
    </location>
</feature>
<feature type="transit peptide" description="Thylakoid" evidence="2">
    <location>
        <begin position="56"/>
        <end status="unknown"/>
    </location>
</feature>
<feature type="chain" id="PRO_0000341332" description="ATP-dependent zinc metalloprotease FTSH 7, chloroplastic">
    <location>
        <begin status="unknown"/>
        <end position="802"/>
    </location>
</feature>
<feature type="transmembrane region" description="Helical" evidence="2">
    <location>
        <begin position="134"/>
        <end position="154"/>
    </location>
</feature>
<feature type="transmembrane region" description="Helical" evidence="2">
    <location>
        <begin position="268"/>
        <end position="288"/>
    </location>
</feature>
<feature type="region of interest" description="Disordered" evidence="3">
    <location>
        <begin position="87"/>
        <end position="117"/>
    </location>
</feature>
<feature type="compositionally biased region" description="Acidic residues" evidence="3">
    <location>
        <begin position="88"/>
        <end position="102"/>
    </location>
</feature>
<feature type="active site" evidence="1">
    <location>
        <position position="591"/>
    </location>
</feature>
<feature type="binding site" evidence="2">
    <location>
        <begin position="365"/>
        <end position="372"/>
    </location>
    <ligand>
        <name>ATP</name>
        <dbReference type="ChEBI" id="CHEBI:30616"/>
    </ligand>
</feature>
<feature type="binding site" evidence="1">
    <location>
        <position position="590"/>
    </location>
    <ligand>
        <name>Zn(2+)</name>
        <dbReference type="ChEBI" id="CHEBI:29105"/>
        <note>catalytic</note>
    </ligand>
</feature>
<feature type="binding site" evidence="1">
    <location>
        <position position="594"/>
    </location>
    <ligand>
        <name>Zn(2+)</name>
        <dbReference type="ChEBI" id="CHEBI:29105"/>
        <note>catalytic</note>
    </ligand>
</feature>
<feature type="binding site" evidence="1">
    <location>
        <position position="673"/>
    </location>
    <ligand>
        <name>Zn(2+)</name>
        <dbReference type="ChEBI" id="CHEBI:29105"/>
        <note>catalytic</note>
    </ligand>
</feature>
<accession>Q9SD67</accession>
<name>FTSH7_ARATH</name>
<proteinExistence type="evidence at transcript level"/>
<protein>
    <recommendedName>
        <fullName>ATP-dependent zinc metalloprotease FTSH 7, chloroplastic</fullName>
        <shortName>AtFTSH7</shortName>
        <ecNumber>3.4.24.-</ecNumber>
    </recommendedName>
</protein>
<evidence type="ECO:0000250" key="1"/>
<evidence type="ECO:0000255" key="2"/>
<evidence type="ECO:0000256" key="3">
    <source>
        <dbReference type="SAM" id="MobiDB-lite"/>
    </source>
</evidence>
<evidence type="ECO:0000269" key="4">
    <source>
    </source>
</evidence>
<evidence type="ECO:0000305" key="5"/>
<gene>
    <name type="primary">FTSH7</name>
    <name type="ordered locus">At3g47060</name>
    <name type="ORF">F13I12.110</name>
</gene>
<sequence>MTTTFEFLQPRIHGFATCCSSNSLLYSKASRFFNDRCRVYRQNPNRFVSNSITLPLQKKQVTVLRNHERFNLWDGFSRKKSRLVVNCQEDDQNESSSEEEESSQSTPAKSERKREKKEDKVWWSKGKKWQWQPIIQAQGIGVLLLQLSVVMFVMRLLRPGIPLPGSEPRIQTTFVSVPYSEFLSKVNSNQVQKVEVDGVQVLFKLRDDGKWQESETSRLSQSSESLLRTVAPTKRVVYSTTRPGDIKTPYEKMLGNNVEFGSPEKRSGGFFNSALIALFYIAVLAGLIRFPVSFSTSSTGQLRTRKAGGPDGGKVSGGGETITFADVAGVDEAKEELEEIVEFLRNPEKYVRLGARPPRGVLLVGLPGTGKTLLAKAVAGEAEVPFISCSASEFVELYVGMGASRVRDLFARAKKEAPSIIFIDEIDAVAKSRDGKFRMGSNDEREQTLNQLLTEMDGFDSNSAVIVLGATNRADVLDPALRRPGRFDRVVTVETPDKIGRESILRVHVSKKELPLGDDVNLGSIASMTTGFTGADLANLVNEAALLAGRKNKTNVEKIDFIQAVERSIAGIEKKSARLKGNEKAVVARHEAGHAVVGTAVANLLTGQPRVEKLSILPRTGGALGFTYIPPTSEDRYLLFIDELLGRLVTLLGGRAAEEVVYSGRISTGAFDDIRRATDMAYKAVAEYGLNQKIGPVSVATLSGGGIDDSGGSPWGRDQGKLVDLVQKEVTILLQSALDVALSVVRANPDVLEGLGAQLEEKEKVEGEELQKWLSMVVAPEELAVFVEGKQELLLPAQASSS</sequence>
<organism>
    <name type="scientific">Arabidopsis thaliana</name>
    <name type="common">Mouse-ear cress</name>
    <dbReference type="NCBI Taxonomy" id="3702"/>
    <lineage>
        <taxon>Eukaryota</taxon>
        <taxon>Viridiplantae</taxon>
        <taxon>Streptophyta</taxon>
        <taxon>Embryophyta</taxon>
        <taxon>Tracheophyta</taxon>
        <taxon>Spermatophyta</taxon>
        <taxon>Magnoliopsida</taxon>
        <taxon>eudicotyledons</taxon>
        <taxon>Gunneridae</taxon>
        <taxon>Pentapetalae</taxon>
        <taxon>rosids</taxon>
        <taxon>malvids</taxon>
        <taxon>Brassicales</taxon>
        <taxon>Brassicaceae</taxon>
        <taxon>Camelineae</taxon>
        <taxon>Arabidopsis</taxon>
    </lineage>
</organism>
<keyword id="KW-0067">ATP-binding</keyword>
<keyword id="KW-0150">Chloroplast</keyword>
<keyword id="KW-0378">Hydrolase</keyword>
<keyword id="KW-0472">Membrane</keyword>
<keyword id="KW-0479">Metal-binding</keyword>
<keyword id="KW-0482">Metalloprotease</keyword>
<keyword id="KW-0547">Nucleotide-binding</keyword>
<keyword id="KW-0934">Plastid</keyword>
<keyword id="KW-0645">Protease</keyword>
<keyword id="KW-1185">Reference proteome</keyword>
<keyword id="KW-0793">Thylakoid</keyword>
<keyword id="KW-0809">Transit peptide</keyword>
<keyword id="KW-0812">Transmembrane</keyword>
<keyword id="KW-1133">Transmembrane helix</keyword>
<keyword id="KW-0862">Zinc</keyword>